<dbReference type="EMBL" id="U17246">
    <property type="protein sequence ID" value="AAB67470.1"/>
    <property type="molecule type" value="Genomic_DNA"/>
</dbReference>
<dbReference type="EMBL" id="BK006945">
    <property type="protein sequence ID" value="DAA09496.1"/>
    <property type="molecule type" value="Genomic_DNA"/>
</dbReference>
<dbReference type="PIR" id="S51421">
    <property type="entry name" value="S51421"/>
</dbReference>
<dbReference type="RefSeq" id="NP_013277.1">
    <property type="nucleotide sequence ID" value="NM_001182063.1"/>
</dbReference>
<dbReference type="SMR" id="P48743"/>
<dbReference type="BioGRID" id="31447">
    <property type="interactions" value="181"/>
</dbReference>
<dbReference type="DIP" id="DIP-6790N"/>
<dbReference type="FunCoup" id="P48743">
    <property type="interactions" value="1002"/>
</dbReference>
<dbReference type="IntAct" id="P48743">
    <property type="interactions" value="19"/>
</dbReference>
<dbReference type="MINT" id="P48743"/>
<dbReference type="STRING" id="4932.YLR176C"/>
<dbReference type="GlyGen" id="P48743">
    <property type="glycosylation" value="2 sites"/>
</dbReference>
<dbReference type="iPTMnet" id="P48743"/>
<dbReference type="PaxDb" id="4932-YLR176C"/>
<dbReference type="PeptideAtlas" id="P48743"/>
<dbReference type="EnsemblFungi" id="YLR176C_mRNA">
    <property type="protein sequence ID" value="YLR176C"/>
    <property type="gene ID" value="YLR176C"/>
</dbReference>
<dbReference type="GeneID" id="850873"/>
<dbReference type="KEGG" id="sce:YLR176C"/>
<dbReference type="AGR" id="SGD:S000004166"/>
<dbReference type="SGD" id="S000004166">
    <property type="gene designation" value="RFX1"/>
</dbReference>
<dbReference type="VEuPathDB" id="FungiDB:YLR176C"/>
<dbReference type="eggNOG" id="KOG3712">
    <property type="taxonomic scope" value="Eukaryota"/>
</dbReference>
<dbReference type="GeneTree" id="ENSGT01050000244970"/>
<dbReference type="HOGENOM" id="CLU_011526_2_0_1"/>
<dbReference type="InParanoid" id="P48743"/>
<dbReference type="OMA" id="AQYASSC"/>
<dbReference type="OrthoDB" id="10056949at2759"/>
<dbReference type="BioCyc" id="YEAST:G3O-32301-MONOMER"/>
<dbReference type="BioGRID-ORCS" id="850873">
    <property type="hits" value="8 hits in 13 CRISPR screens"/>
</dbReference>
<dbReference type="PRO" id="PR:P48743"/>
<dbReference type="Proteomes" id="UP000002311">
    <property type="component" value="Chromosome XII"/>
</dbReference>
<dbReference type="RNAct" id="P48743">
    <property type="molecule type" value="protein"/>
</dbReference>
<dbReference type="GO" id="GO:0005737">
    <property type="term" value="C:cytoplasm"/>
    <property type="evidence" value="ECO:0007005"/>
    <property type="project" value="SGD"/>
</dbReference>
<dbReference type="GO" id="GO:0005634">
    <property type="term" value="C:nucleus"/>
    <property type="evidence" value="ECO:0007005"/>
    <property type="project" value="SGD"/>
</dbReference>
<dbReference type="GO" id="GO:0000981">
    <property type="term" value="F:DNA-binding transcription factor activity, RNA polymerase II-specific"/>
    <property type="evidence" value="ECO:0000318"/>
    <property type="project" value="GO_Central"/>
</dbReference>
<dbReference type="GO" id="GO:0000978">
    <property type="term" value="F:RNA polymerase II cis-regulatory region sequence-specific DNA binding"/>
    <property type="evidence" value="ECO:0000314"/>
    <property type="project" value="SGD"/>
</dbReference>
<dbReference type="GO" id="GO:0043565">
    <property type="term" value="F:sequence-specific DNA binding"/>
    <property type="evidence" value="ECO:0007005"/>
    <property type="project" value="SGD"/>
</dbReference>
<dbReference type="GO" id="GO:0000122">
    <property type="term" value="P:negative regulation of transcription by RNA polymerase II"/>
    <property type="evidence" value="ECO:0000314"/>
    <property type="project" value="SGD"/>
</dbReference>
<dbReference type="GO" id="GO:0045944">
    <property type="term" value="P:positive regulation of transcription by RNA polymerase II"/>
    <property type="evidence" value="ECO:0000315"/>
    <property type="project" value="SGD"/>
</dbReference>
<dbReference type="GO" id="GO:0006357">
    <property type="term" value="P:regulation of transcription by RNA polymerase II"/>
    <property type="evidence" value="ECO:0000318"/>
    <property type="project" value="GO_Central"/>
</dbReference>
<dbReference type="FunFam" id="1.10.10.10:FF:000119">
    <property type="entry name" value="DNA damage and replication checkpoint protein"/>
    <property type="match status" value="1"/>
</dbReference>
<dbReference type="Gene3D" id="1.10.10.10">
    <property type="entry name" value="Winged helix-like DNA-binding domain superfamily/Winged helix DNA-binding domain"/>
    <property type="match status" value="1"/>
</dbReference>
<dbReference type="InterPro" id="IPR003150">
    <property type="entry name" value="DNA-bd_RFX"/>
</dbReference>
<dbReference type="InterPro" id="IPR039779">
    <property type="entry name" value="RFX-like"/>
</dbReference>
<dbReference type="InterPro" id="IPR036388">
    <property type="entry name" value="WH-like_DNA-bd_sf"/>
</dbReference>
<dbReference type="InterPro" id="IPR036390">
    <property type="entry name" value="WH_DNA-bd_sf"/>
</dbReference>
<dbReference type="PANTHER" id="PTHR12619">
    <property type="entry name" value="RFX TRANSCRIPTION FACTOR FAMILY"/>
    <property type="match status" value="1"/>
</dbReference>
<dbReference type="PANTHER" id="PTHR12619:SF5">
    <property type="entry name" value="TRANSCRIPTION FACTOR RFX4"/>
    <property type="match status" value="1"/>
</dbReference>
<dbReference type="Pfam" id="PF25340">
    <property type="entry name" value="BCD_RFX"/>
    <property type="match status" value="1"/>
</dbReference>
<dbReference type="Pfam" id="PF02257">
    <property type="entry name" value="RFX_DNA_binding"/>
    <property type="match status" value="1"/>
</dbReference>
<dbReference type="SUPFAM" id="SSF46785">
    <property type="entry name" value="Winged helix' DNA-binding domain"/>
    <property type="match status" value="1"/>
</dbReference>
<dbReference type="PROSITE" id="PS51526">
    <property type="entry name" value="RFX_DBD"/>
    <property type="match status" value="1"/>
</dbReference>
<name>RFX1_YEAST</name>
<reference key="1">
    <citation type="journal article" date="1997" name="Nature">
        <title>The nucleotide sequence of Saccharomyces cerevisiae chromosome XII.</title>
        <authorList>
            <person name="Johnston M."/>
            <person name="Hillier L.W."/>
            <person name="Riles L."/>
            <person name="Albermann K."/>
            <person name="Andre B."/>
            <person name="Ansorge W."/>
            <person name="Benes V."/>
            <person name="Brueckner M."/>
            <person name="Delius H."/>
            <person name="Dubois E."/>
            <person name="Duesterhoeft A."/>
            <person name="Entian K.-D."/>
            <person name="Floeth M."/>
            <person name="Goffeau A."/>
            <person name="Hebling U."/>
            <person name="Heumann K."/>
            <person name="Heuss-Neitzel D."/>
            <person name="Hilbert H."/>
            <person name="Hilger F."/>
            <person name="Kleine K."/>
            <person name="Koetter P."/>
            <person name="Louis E.J."/>
            <person name="Messenguy F."/>
            <person name="Mewes H.-W."/>
            <person name="Miosga T."/>
            <person name="Moestl D."/>
            <person name="Mueller-Auer S."/>
            <person name="Nentwich U."/>
            <person name="Obermaier B."/>
            <person name="Piravandi E."/>
            <person name="Pohl T.M."/>
            <person name="Portetelle D."/>
            <person name="Purnelle B."/>
            <person name="Rechmann S."/>
            <person name="Rieger M."/>
            <person name="Rinke M."/>
            <person name="Rose M."/>
            <person name="Scharfe M."/>
            <person name="Scherens B."/>
            <person name="Scholler P."/>
            <person name="Schwager C."/>
            <person name="Schwarz S."/>
            <person name="Underwood A.P."/>
            <person name="Urrestarazu L.A."/>
            <person name="Vandenbol M."/>
            <person name="Verhasselt P."/>
            <person name="Vierendeels F."/>
            <person name="Voet M."/>
            <person name="Volckaert G."/>
            <person name="Voss H."/>
            <person name="Wambutt R."/>
            <person name="Wedler E."/>
            <person name="Wedler H."/>
            <person name="Zimmermann F.K."/>
            <person name="Zollner A."/>
            <person name="Hani J."/>
            <person name="Hoheisel J.D."/>
        </authorList>
    </citation>
    <scope>NUCLEOTIDE SEQUENCE [LARGE SCALE GENOMIC DNA]</scope>
    <source>
        <strain>ATCC 204508 / S288c</strain>
    </source>
</reference>
<reference key="2">
    <citation type="journal article" date="2014" name="G3 (Bethesda)">
        <title>The reference genome sequence of Saccharomyces cerevisiae: Then and now.</title>
        <authorList>
            <person name="Engel S.R."/>
            <person name="Dietrich F.S."/>
            <person name="Fisk D.G."/>
            <person name="Binkley G."/>
            <person name="Balakrishnan R."/>
            <person name="Costanzo M.C."/>
            <person name="Dwight S.S."/>
            <person name="Hitz B.C."/>
            <person name="Karra K."/>
            <person name="Nash R.S."/>
            <person name="Weng S."/>
            <person name="Wong E.D."/>
            <person name="Lloyd P."/>
            <person name="Skrzypek M.S."/>
            <person name="Miyasato S.R."/>
            <person name="Simison M."/>
            <person name="Cherry J.M."/>
        </authorList>
    </citation>
    <scope>GENOME REANNOTATION</scope>
    <source>
        <strain>ATCC 204508 / S288c</strain>
    </source>
</reference>
<reference key="3">
    <citation type="journal article" date="2003" name="Nature">
        <title>Global analysis of protein expression in yeast.</title>
        <authorList>
            <person name="Ghaemmaghami S."/>
            <person name="Huh W.-K."/>
            <person name="Bower K."/>
            <person name="Howson R.W."/>
            <person name="Belle A."/>
            <person name="Dephoure N."/>
            <person name="O'Shea E.K."/>
            <person name="Weissman J.S."/>
        </authorList>
    </citation>
    <scope>LEVEL OF PROTEIN EXPRESSION [LARGE SCALE ANALYSIS]</scope>
</reference>
<reference key="4">
    <citation type="journal article" date="2008" name="Mol. Cell. Proteomics">
        <title>A multidimensional chromatography technology for in-depth phosphoproteome analysis.</title>
        <authorList>
            <person name="Albuquerque C.P."/>
            <person name="Smolka M.B."/>
            <person name="Payne S.H."/>
            <person name="Bafna V."/>
            <person name="Eng J."/>
            <person name="Zhou H."/>
        </authorList>
    </citation>
    <scope>IDENTIFICATION BY MASS SPECTROMETRY [LARGE SCALE ANALYSIS]</scope>
</reference>
<reference key="5">
    <citation type="journal article" date="2009" name="Science">
        <title>Global analysis of Cdk1 substrate phosphorylation sites provides insights into evolution.</title>
        <authorList>
            <person name="Holt L.J."/>
            <person name="Tuch B.B."/>
            <person name="Villen J."/>
            <person name="Johnson A.D."/>
            <person name="Gygi S.P."/>
            <person name="Morgan D.O."/>
        </authorList>
    </citation>
    <scope>PHOSPHORYLATION [LARGE SCALE ANALYSIS] AT SER-173</scope>
    <scope>IDENTIFICATION BY MASS SPECTROMETRY [LARGE SCALE ANALYSIS]</scope>
</reference>
<accession>P48743</accession>
<accession>D6VYI0</accession>
<comment type="interaction">
    <interactant intactId="EBI-15036">
        <id>P48743</id>
    </interactant>
    <interactant intactId="EBI-18215">
        <id>P14922</id>
        <label>CYC8</label>
    </interactant>
    <organismsDiffer>false</organismsDiffer>
    <experiments>2</experiments>
</comment>
<comment type="interaction">
    <interactant intactId="EBI-15036">
        <id>P48743</id>
    </interactant>
    <interactant intactId="EBI-19654">
        <id>P16649</id>
        <label>TUP1</label>
    </interactant>
    <organismsDiffer>false</organismsDiffer>
    <experiments>2</experiments>
</comment>
<comment type="miscellaneous">
    <text evidence="3">Present with 377 molecules/cell in log phase SD medium.</text>
</comment>
<comment type="similarity">
    <text evidence="1">Belongs to the RFX family.</text>
</comment>
<feature type="chain" id="PRO_0000215295" description="RFX-like DNA-binding protein RFX1">
    <location>
        <begin position="1"/>
        <end position="811"/>
    </location>
</feature>
<feature type="DNA-binding region" description="RFX-type winged-helix" evidence="1">
    <location>
        <begin position="285"/>
        <end position="360"/>
    </location>
</feature>
<feature type="region of interest" description="Disordered" evidence="2">
    <location>
        <begin position="48"/>
        <end position="92"/>
    </location>
</feature>
<feature type="region of interest" description="Disordered" evidence="2">
    <location>
        <begin position="111"/>
        <end position="156"/>
    </location>
</feature>
<feature type="region of interest" description="Disordered" evidence="2">
    <location>
        <begin position="181"/>
        <end position="222"/>
    </location>
</feature>
<feature type="region of interest" description="Disordered" evidence="2">
    <location>
        <begin position="377"/>
        <end position="461"/>
    </location>
</feature>
<feature type="compositionally biased region" description="Low complexity" evidence="2">
    <location>
        <begin position="51"/>
        <end position="70"/>
    </location>
</feature>
<feature type="compositionally biased region" description="Pro residues" evidence="2">
    <location>
        <begin position="140"/>
        <end position="149"/>
    </location>
</feature>
<feature type="compositionally biased region" description="Polar residues" evidence="2">
    <location>
        <begin position="185"/>
        <end position="204"/>
    </location>
</feature>
<feature type="compositionally biased region" description="Low complexity" evidence="2">
    <location>
        <begin position="377"/>
        <end position="391"/>
    </location>
</feature>
<feature type="compositionally biased region" description="Polar residues" evidence="2">
    <location>
        <begin position="409"/>
        <end position="428"/>
    </location>
</feature>
<feature type="compositionally biased region" description="Basic and acidic residues" evidence="2">
    <location>
        <begin position="434"/>
        <end position="445"/>
    </location>
</feature>
<feature type="modified residue" description="Phosphoserine" evidence="4">
    <location>
        <position position="173"/>
    </location>
</feature>
<keyword id="KW-0238">DNA-binding</keyword>
<keyword id="KW-0597">Phosphoprotein</keyword>
<keyword id="KW-1185">Reference proteome</keyword>
<evidence type="ECO:0000255" key="1">
    <source>
        <dbReference type="PROSITE-ProRule" id="PRU00858"/>
    </source>
</evidence>
<evidence type="ECO:0000256" key="2">
    <source>
        <dbReference type="SAM" id="MobiDB-lite"/>
    </source>
</evidence>
<evidence type="ECO:0000269" key="3">
    <source>
    </source>
</evidence>
<evidence type="ECO:0007744" key="4">
    <source>
    </source>
</evidence>
<gene>
    <name type="primary">RFX1</name>
    <name type="synonym">CRT1</name>
    <name type="ordered locus">YLR176C</name>
    <name type="ORF">L9470.18</name>
</gene>
<proteinExistence type="evidence at protein level"/>
<sequence length="811" mass="90584">MVIFKERKPTENLFTRKIPAKYFIFSPSFLSVHYFEFYLPMSGDNNIEPTSRGSNDNSNGPSNGSSVNSNRYSLNAPKYSSQPPPASHTYLPPMSVNIPPIASKSSSIYSLLHQSSPRPETPNPILPPLIGSGPGSHKPSPTPTQPPAQPATQRQPATYSVYPASISLNRSNSSAYPLSFKSEETLNNNPPTAAKRTNTFPSIPSSTKKQKTSQEKRISSISRRNTQEIIAKQIAENNKSKTIEEYAQIVKHAEIKVLSMDSQNTSKAALQLAEQNRERERQVFALLWLMKNCKSQHDSYVPRGKIFAQYASSCSQNNLKPLSQASLGKLIRTVFPDLTTRRLGMRGQSKYHYCGLKLTVNESGSVSLNNNNASLSLVHNNDPISPLSSPSPSSPSPQVPNVSSPFSLNRKSLSRTGSPVKQSSNDNPNEPELESQHPNETEANKLDSLPPAANNPTGTLSSDELTFTHDLIEKVFNCNDKLSDNYNTQILSNTEHPLLTSYKLDFPKIPAGVLPTDTDSDVISSLESLYHIHCNSVYECIKFLKSDNISNALFFSNSNSISPTMFNLFISEPLIDWVTKCDLITYTGLIKFFSQFIIHSNEISDSIIQKLESMIKLLPEQINKAVLELPKALVQRKLSIINNFTKLVKKLIKLLKFILNFLKSFPIFKSGMNNDWKNIVNLDDILEMMINEDDTNSETNTIMQHLQGFCQVFVTKFLNSSMSVSNDPSVSIECKSLNEMIKDFCSFISLQSKFSCLKLIDCSTRFRNAIIGDISLKSNENLLSWLFLNNVMGQLLNYCFEVMKFVNGLKV</sequence>
<organism>
    <name type="scientific">Saccharomyces cerevisiae (strain ATCC 204508 / S288c)</name>
    <name type="common">Baker's yeast</name>
    <dbReference type="NCBI Taxonomy" id="559292"/>
    <lineage>
        <taxon>Eukaryota</taxon>
        <taxon>Fungi</taxon>
        <taxon>Dikarya</taxon>
        <taxon>Ascomycota</taxon>
        <taxon>Saccharomycotina</taxon>
        <taxon>Saccharomycetes</taxon>
        <taxon>Saccharomycetales</taxon>
        <taxon>Saccharomycetaceae</taxon>
        <taxon>Saccharomyces</taxon>
    </lineage>
</organism>
<protein>
    <recommendedName>
        <fullName>RFX-like DNA-binding protein RFX1</fullName>
    </recommendedName>
</protein>